<dbReference type="EMBL" id="CP000034">
    <property type="protein sequence ID" value="ABB63687.1"/>
    <property type="molecule type" value="Genomic_DNA"/>
</dbReference>
<dbReference type="RefSeq" id="WP_000934296.1">
    <property type="nucleotide sequence ID" value="NC_007606.1"/>
</dbReference>
<dbReference type="RefSeq" id="YP_405178.1">
    <property type="nucleotide sequence ID" value="NC_007606.1"/>
</dbReference>
<dbReference type="SMR" id="Q32AG8"/>
<dbReference type="STRING" id="300267.SDY_3731"/>
<dbReference type="EnsemblBacteria" id="ABB63687">
    <property type="protein sequence ID" value="ABB63687"/>
    <property type="gene ID" value="SDY_3731"/>
</dbReference>
<dbReference type="KEGG" id="sdy:SDY_3731"/>
<dbReference type="PATRIC" id="fig|300267.13.peg.4423"/>
<dbReference type="HOGENOM" id="CLU_142729_0_0_6"/>
<dbReference type="Proteomes" id="UP000002716">
    <property type="component" value="Chromosome"/>
</dbReference>
<dbReference type="GO" id="GO:0005737">
    <property type="term" value="C:cytoplasm"/>
    <property type="evidence" value="ECO:0007669"/>
    <property type="project" value="UniProtKB-SubCell"/>
</dbReference>
<dbReference type="GO" id="GO:0006355">
    <property type="term" value="P:regulation of DNA-templated transcription"/>
    <property type="evidence" value="ECO:0007669"/>
    <property type="project" value="InterPro"/>
</dbReference>
<dbReference type="FunFam" id="1.20.120.1370:FF:000001">
    <property type="entry name" value="Regulator of sigma D"/>
    <property type="match status" value="1"/>
</dbReference>
<dbReference type="Gene3D" id="1.20.120.1370">
    <property type="entry name" value="Regulator of RNA polymerase sigma(70) subunit, domain 4"/>
    <property type="match status" value="1"/>
</dbReference>
<dbReference type="HAMAP" id="MF_01181">
    <property type="entry name" value="Rsd"/>
    <property type="match status" value="1"/>
</dbReference>
<dbReference type="InterPro" id="IPR038309">
    <property type="entry name" value="Rsd/AlgQ_sf"/>
</dbReference>
<dbReference type="InterPro" id="IPR023785">
    <property type="entry name" value="Sigma70_reg_Rsd"/>
</dbReference>
<dbReference type="InterPro" id="IPR007448">
    <property type="entry name" value="Sigma70_reg_Rsd_AlgQ"/>
</dbReference>
<dbReference type="NCBIfam" id="NF008723">
    <property type="entry name" value="PRK11718.1"/>
    <property type="match status" value="1"/>
</dbReference>
<dbReference type="Pfam" id="PF04353">
    <property type="entry name" value="Rsd_AlgQ"/>
    <property type="match status" value="1"/>
</dbReference>
<dbReference type="PIRSF" id="PIRSF016548">
    <property type="entry name" value="Rsd_AlgQ"/>
    <property type="match status" value="1"/>
</dbReference>
<proteinExistence type="inferred from homology"/>
<sequence>MLNQLDNLTERVRGSNKLVDRWLHVRKHLLVAYYNLGGIKPGKESYMRLNEKALDDFCQSLVDYLSAGHFSIYERILHKLESNGQLARAAKIWPQLEANTQQIMDYYDSSLETAIDHDNYLEFQQVLSDIGEALEARFVLEDKLILLVLDAARVKHPA</sequence>
<keyword id="KW-0963">Cytoplasm</keyword>
<keyword id="KW-1185">Reference proteome</keyword>
<keyword id="KW-0804">Transcription</keyword>
<keyword id="KW-0805">Transcription regulation</keyword>
<comment type="function">
    <text evidence="1">Binds RpoD and negatively regulates RpoD-mediated transcription activation by preventing the interaction between the primary sigma factor RpoD with the catalytic core of the RNA polymerase and with promoter DNA. May be involved in replacement of the RNA polymerase sigma subunit from RpoD to RpoS during the transition from exponential growth to the stationary phase.</text>
</comment>
<comment type="subunit">
    <text evidence="1">Interacts with RpoD.</text>
</comment>
<comment type="subcellular location">
    <subcellularLocation>
        <location evidence="1">Cytoplasm</location>
    </subcellularLocation>
</comment>
<comment type="similarity">
    <text evidence="1">Belongs to the Rsd/AlgQ family.</text>
</comment>
<protein>
    <recommendedName>
        <fullName evidence="1">Regulator of sigma D</fullName>
    </recommendedName>
</protein>
<feature type="chain" id="PRO_0000268888" description="Regulator of sigma D">
    <location>
        <begin position="1"/>
        <end position="158"/>
    </location>
</feature>
<reference key="1">
    <citation type="journal article" date="2005" name="Nucleic Acids Res.">
        <title>Genome dynamics and diversity of Shigella species, the etiologic agents of bacillary dysentery.</title>
        <authorList>
            <person name="Yang F."/>
            <person name="Yang J."/>
            <person name="Zhang X."/>
            <person name="Chen L."/>
            <person name="Jiang Y."/>
            <person name="Yan Y."/>
            <person name="Tang X."/>
            <person name="Wang J."/>
            <person name="Xiong Z."/>
            <person name="Dong J."/>
            <person name="Xue Y."/>
            <person name="Zhu Y."/>
            <person name="Xu X."/>
            <person name="Sun L."/>
            <person name="Chen S."/>
            <person name="Nie H."/>
            <person name="Peng J."/>
            <person name="Xu J."/>
            <person name="Wang Y."/>
            <person name="Yuan Z."/>
            <person name="Wen Y."/>
            <person name="Yao Z."/>
            <person name="Shen Y."/>
            <person name="Qiang B."/>
            <person name="Hou Y."/>
            <person name="Yu J."/>
            <person name="Jin Q."/>
        </authorList>
    </citation>
    <scope>NUCLEOTIDE SEQUENCE [LARGE SCALE GENOMIC DNA]</scope>
    <source>
        <strain>Sd197</strain>
    </source>
</reference>
<gene>
    <name evidence="1" type="primary">rsd</name>
    <name type="ordered locus">SDY_3731</name>
</gene>
<organism>
    <name type="scientific">Shigella dysenteriae serotype 1 (strain Sd197)</name>
    <dbReference type="NCBI Taxonomy" id="300267"/>
    <lineage>
        <taxon>Bacteria</taxon>
        <taxon>Pseudomonadati</taxon>
        <taxon>Pseudomonadota</taxon>
        <taxon>Gammaproteobacteria</taxon>
        <taxon>Enterobacterales</taxon>
        <taxon>Enterobacteriaceae</taxon>
        <taxon>Shigella</taxon>
    </lineage>
</organism>
<evidence type="ECO:0000255" key="1">
    <source>
        <dbReference type="HAMAP-Rule" id="MF_01181"/>
    </source>
</evidence>
<name>RSD_SHIDS</name>
<accession>Q32AG8</accession>